<evidence type="ECO:0000255" key="1">
    <source>
        <dbReference type="HAMAP-Rule" id="MF_00633"/>
    </source>
</evidence>
<protein>
    <recommendedName>
        <fullName evidence="1">Cytochrome b6</fullName>
    </recommendedName>
</protein>
<keyword id="KW-0249">Electron transport</keyword>
<keyword id="KW-0349">Heme</keyword>
<keyword id="KW-0408">Iron</keyword>
<keyword id="KW-0472">Membrane</keyword>
<keyword id="KW-0479">Metal-binding</keyword>
<keyword id="KW-0602">Photosynthesis</keyword>
<keyword id="KW-0793">Thylakoid</keyword>
<keyword id="KW-0812">Transmembrane</keyword>
<keyword id="KW-1133">Transmembrane helix</keyword>
<keyword id="KW-0813">Transport</keyword>
<accession>A8G2Y6</accession>
<feature type="chain" id="PRO_1000061409" description="Cytochrome b6">
    <location>
        <begin position="1"/>
        <end position="218"/>
    </location>
</feature>
<feature type="transmembrane region" description="Helical" evidence="1">
    <location>
        <begin position="35"/>
        <end position="55"/>
    </location>
</feature>
<feature type="transmembrane region" description="Helical" evidence="1">
    <location>
        <begin position="93"/>
        <end position="113"/>
    </location>
</feature>
<feature type="transmembrane region" description="Helical" evidence="1">
    <location>
        <begin position="119"/>
        <end position="139"/>
    </location>
</feature>
<feature type="transmembrane region" description="Helical" evidence="1">
    <location>
        <begin position="189"/>
        <end position="209"/>
    </location>
</feature>
<feature type="binding site" description="covalent" evidence="1">
    <location>
        <position position="38"/>
    </location>
    <ligand>
        <name>heme c</name>
        <dbReference type="ChEBI" id="CHEBI:61717"/>
    </ligand>
</feature>
<feature type="binding site" description="axial binding residue" evidence="1">
    <location>
        <position position="89"/>
    </location>
    <ligand>
        <name>heme b</name>
        <dbReference type="ChEBI" id="CHEBI:60344"/>
        <label>2</label>
    </ligand>
    <ligandPart>
        <name>Fe</name>
        <dbReference type="ChEBI" id="CHEBI:18248"/>
    </ligandPart>
</feature>
<feature type="binding site" description="axial binding residue" evidence="1">
    <location>
        <position position="103"/>
    </location>
    <ligand>
        <name>heme b</name>
        <dbReference type="ChEBI" id="CHEBI:60344"/>
        <label>1</label>
    </ligand>
    <ligandPart>
        <name>Fe</name>
        <dbReference type="ChEBI" id="CHEBI:18248"/>
    </ligandPart>
</feature>
<feature type="binding site" description="axial binding residue" evidence="1">
    <location>
        <position position="190"/>
    </location>
    <ligand>
        <name>heme b</name>
        <dbReference type="ChEBI" id="CHEBI:60344"/>
        <label>2</label>
    </ligand>
    <ligandPart>
        <name>Fe</name>
        <dbReference type="ChEBI" id="CHEBI:18248"/>
    </ligandPart>
</feature>
<feature type="binding site" description="axial binding residue" evidence="1">
    <location>
        <position position="205"/>
    </location>
    <ligand>
        <name>heme b</name>
        <dbReference type="ChEBI" id="CHEBI:60344"/>
        <label>1</label>
    </ligand>
    <ligandPart>
        <name>Fe</name>
        <dbReference type="ChEBI" id="CHEBI:18248"/>
    </ligandPart>
</feature>
<organism>
    <name type="scientific">Prochlorococcus marinus (strain MIT 9215)</name>
    <dbReference type="NCBI Taxonomy" id="93060"/>
    <lineage>
        <taxon>Bacteria</taxon>
        <taxon>Bacillati</taxon>
        <taxon>Cyanobacteriota</taxon>
        <taxon>Cyanophyceae</taxon>
        <taxon>Synechococcales</taxon>
        <taxon>Prochlorococcaceae</taxon>
        <taxon>Prochlorococcus</taxon>
    </lineage>
</organism>
<comment type="function">
    <text evidence="1">Component of the cytochrome b6-f complex, which mediates electron transfer between photosystem II (PSII) and photosystem I (PSI), cyclic electron flow around PSI, and state transitions.</text>
</comment>
<comment type="cofactor">
    <cofactor evidence="1">
        <name>heme b</name>
        <dbReference type="ChEBI" id="CHEBI:60344"/>
    </cofactor>
    <text evidence="1">Binds 2 heme b groups non-covalently with two histidine residues as axial ligands.</text>
</comment>
<comment type="cofactor">
    <cofactor evidence="1">
        <name>heme c</name>
        <dbReference type="ChEBI" id="CHEBI:61717"/>
    </cofactor>
    <text evidence="1">Binds one heme group covalently by a single cysteine link with no axial amino acid ligand. This heme was named heme ci.</text>
</comment>
<comment type="subunit">
    <text evidence="1">The 4 large subunits of the cytochrome b6-f complex are cytochrome b6, subunit IV (17 kDa polypeptide, PetD), cytochrome f and the Rieske protein, while the 4 small subunits are PetG, PetL, PetM and PetN. The complex functions as a dimer.</text>
</comment>
<comment type="subcellular location">
    <subcellularLocation>
        <location evidence="1">Cellular thylakoid membrane</location>
        <topology evidence="1">Multi-pass membrane protein</topology>
    </subcellularLocation>
</comment>
<comment type="miscellaneous">
    <text evidence="1">Heme 1 (or BH or b566) is high-potential and absorbs at about 566 nm, and heme 2 (or BL or b562) is low-potential and absorbs at about 562 nm.</text>
</comment>
<comment type="similarity">
    <text evidence="1">Belongs to the cytochrome b family. PetB subfamily.</text>
</comment>
<name>CYB6_PROM2</name>
<gene>
    <name evidence="1" type="primary">petB</name>
    <name type="ordered locus">P9215_03501</name>
</gene>
<sequence length="218" mass="24631">MANSSSVYDWFQERLEIQDITDDVTSKYVPPHVNIFYCLGGITLVCFLIQFATGFAMTFYYKPTVTQAYSSVSYLMTDVSFGWLIRSVHRWSASMMVLMLILHVFRVYLTGGFKRPRELTWVTGVVMAVITVAFGVTGYSLPWDQVGYWAVKIVSGVPAAIPIIGDFMVELLRGGESVGQSTLTRFYSLHTFVLPWSLAVFMLMHFLMIRKQGISGPL</sequence>
<reference key="1">
    <citation type="journal article" date="2007" name="PLoS Genet.">
        <title>Patterns and implications of gene gain and loss in the evolution of Prochlorococcus.</title>
        <authorList>
            <person name="Kettler G.C."/>
            <person name="Martiny A.C."/>
            <person name="Huang K."/>
            <person name="Zucker J."/>
            <person name="Coleman M.L."/>
            <person name="Rodrigue S."/>
            <person name="Chen F."/>
            <person name="Lapidus A."/>
            <person name="Ferriera S."/>
            <person name="Johnson J."/>
            <person name="Steglich C."/>
            <person name="Church G.M."/>
            <person name="Richardson P."/>
            <person name="Chisholm S.W."/>
        </authorList>
    </citation>
    <scope>NUCLEOTIDE SEQUENCE [LARGE SCALE GENOMIC DNA]</scope>
    <source>
        <strain>MIT 9215</strain>
    </source>
</reference>
<dbReference type="EMBL" id="CP000825">
    <property type="protein sequence ID" value="ABV49967.1"/>
    <property type="molecule type" value="Genomic_DNA"/>
</dbReference>
<dbReference type="RefSeq" id="WP_012007118.1">
    <property type="nucleotide sequence ID" value="NC_009840.1"/>
</dbReference>
<dbReference type="SMR" id="A8G2Y6"/>
<dbReference type="STRING" id="93060.P9215_03501"/>
<dbReference type="KEGG" id="pmh:P9215_03501"/>
<dbReference type="eggNOG" id="COG1290">
    <property type="taxonomic scope" value="Bacteria"/>
</dbReference>
<dbReference type="HOGENOM" id="CLU_031114_0_2_3"/>
<dbReference type="OrthoDB" id="9804503at2"/>
<dbReference type="Proteomes" id="UP000002014">
    <property type="component" value="Chromosome"/>
</dbReference>
<dbReference type="GO" id="GO:0031676">
    <property type="term" value="C:plasma membrane-derived thylakoid membrane"/>
    <property type="evidence" value="ECO:0007669"/>
    <property type="project" value="UniProtKB-SubCell"/>
</dbReference>
<dbReference type="GO" id="GO:0045158">
    <property type="term" value="F:electron transporter, transferring electrons within cytochrome b6/f complex of photosystem II activity"/>
    <property type="evidence" value="ECO:0007669"/>
    <property type="project" value="UniProtKB-UniRule"/>
</dbReference>
<dbReference type="GO" id="GO:0046872">
    <property type="term" value="F:metal ion binding"/>
    <property type="evidence" value="ECO:0007669"/>
    <property type="project" value="UniProtKB-KW"/>
</dbReference>
<dbReference type="GO" id="GO:0016491">
    <property type="term" value="F:oxidoreductase activity"/>
    <property type="evidence" value="ECO:0007669"/>
    <property type="project" value="InterPro"/>
</dbReference>
<dbReference type="GO" id="GO:0015979">
    <property type="term" value="P:photosynthesis"/>
    <property type="evidence" value="ECO:0007669"/>
    <property type="project" value="UniProtKB-UniRule"/>
</dbReference>
<dbReference type="GO" id="GO:0022904">
    <property type="term" value="P:respiratory electron transport chain"/>
    <property type="evidence" value="ECO:0007669"/>
    <property type="project" value="InterPro"/>
</dbReference>
<dbReference type="CDD" id="cd00284">
    <property type="entry name" value="Cytochrome_b_N"/>
    <property type="match status" value="1"/>
</dbReference>
<dbReference type="FunFam" id="1.20.810.10:FF:000001">
    <property type="entry name" value="Cytochrome b6"/>
    <property type="match status" value="1"/>
</dbReference>
<dbReference type="Gene3D" id="1.20.810.10">
    <property type="entry name" value="Cytochrome Bc1 Complex, Chain C"/>
    <property type="match status" value="1"/>
</dbReference>
<dbReference type="HAMAP" id="MF_00633">
    <property type="entry name" value="Cytb6_f_cytb6"/>
    <property type="match status" value="1"/>
</dbReference>
<dbReference type="InterPro" id="IPR005797">
    <property type="entry name" value="Cyt_b/b6_N"/>
</dbReference>
<dbReference type="InterPro" id="IPR023530">
    <property type="entry name" value="Cyt_B6_PetB"/>
</dbReference>
<dbReference type="InterPro" id="IPR027387">
    <property type="entry name" value="Cytb/b6-like_sf"/>
</dbReference>
<dbReference type="InterPro" id="IPR048259">
    <property type="entry name" value="Cytochrome_b_N_euk/bac"/>
</dbReference>
<dbReference type="InterPro" id="IPR016174">
    <property type="entry name" value="Di-haem_cyt_TM"/>
</dbReference>
<dbReference type="NCBIfam" id="NF002990">
    <property type="entry name" value="PRK03735.1"/>
    <property type="match status" value="1"/>
</dbReference>
<dbReference type="PANTHER" id="PTHR19271">
    <property type="entry name" value="CYTOCHROME B"/>
    <property type="match status" value="1"/>
</dbReference>
<dbReference type="PANTHER" id="PTHR19271:SF16">
    <property type="entry name" value="CYTOCHROME B"/>
    <property type="match status" value="1"/>
</dbReference>
<dbReference type="Pfam" id="PF00033">
    <property type="entry name" value="Cytochrome_B"/>
    <property type="match status" value="1"/>
</dbReference>
<dbReference type="PIRSF" id="PIRSF000032">
    <property type="entry name" value="Cytochrome_b6"/>
    <property type="match status" value="1"/>
</dbReference>
<dbReference type="SUPFAM" id="SSF81342">
    <property type="entry name" value="Transmembrane di-heme cytochromes"/>
    <property type="match status" value="1"/>
</dbReference>
<dbReference type="PROSITE" id="PS51002">
    <property type="entry name" value="CYTB_NTER"/>
    <property type="match status" value="1"/>
</dbReference>
<proteinExistence type="inferred from homology"/>